<comment type="function">
    <text evidence="1">DNA ligase that catalyzes the formation of phosphodiester linkages between 5'-phosphoryl and 3'-hydroxyl groups in double-stranded DNA using NAD as a coenzyme and as the energy source for the reaction. It is essential for DNA replication and repair of damaged DNA.</text>
</comment>
<comment type="catalytic activity">
    <reaction evidence="1">
        <text>NAD(+) + (deoxyribonucleotide)n-3'-hydroxyl + 5'-phospho-(deoxyribonucleotide)m = (deoxyribonucleotide)n+m + AMP + beta-nicotinamide D-nucleotide.</text>
        <dbReference type="EC" id="6.5.1.2"/>
    </reaction>
</comment>
<comment type="cofactor">
    <cofactor evidence="1">
        <name>Mg(2+)</name>
        <dbReference type="ChEBI" id="CHEBI:18420"/>
    </cofactor>
    <cofactor evidence="1">
        <name>Mn(2+)</name>
        <dbReference type="ChEBI" id="CHEBI:29035"/>
    </cofactor>
</comment>
<comment type="similarity">
    <text evidence="1">Belongs to the NAD-dependent DNA ligase family. LigA subfamily.</text>
</comment>
<proteinExistence type="inferred from homology"/>
<sequence>MIKSQKEYLERIEYLNTLSHHYYNLDESIVSDAVYDELYQELKAYEEKNPNDIQANSPTQKVGATTTTPFSKNPHLMRMWSLDDVFNQSELQAWLQRILKVYPNASFVCSPKLDGVSLNLLYHHGKLVSATTRGNGLEGELVTNNAKHIANIPHFIAYDGEIEIRGEVIISKEDFEALNKERLEANEPLFANPRNAASGSLRQLDSEITKKRKLQFIPWGVGKHSLNFLSFKECLDFIVSLGFGAIQYLSLNKNHQEIEESYHTLIKEREGFFALLDGMVIVVNELGIQKELGYTQKSPKFACAYKFPALEKHTKIIGVINQVGRSGAITPVALLEPVEIAGAMVNRATLHNYSEIEKKNIMLNDRVVVIRSGDVIPKIIKPLETYRDGSQHKIERPKVCPICSHELLCEEIFTYCQNLNCPARLKESLIHFASKDALNIQGLGDKVIEQLFEEKLIVNALDLYALKLEDLMRLDKFKIKKAQNLLDAIQKSKNPPLWRLINALGIEHIGKGASKTLARYGLNVLEKSEAEFLEMEGFGVEMAHSLVNFYASNQEFIRSLFDLLNPKNSDMAKEKQKSSSVFNNKTIVLTGTLSKPRQEYAQMLENLGAKISSSVSAKTDFLIVGENPGSKLALAKKHGVSVLNEEELLKRLKELD</sequence>
<organism>
    <name type="scientific">Helicobacter pylori (strain P12)</name>
    <dbReference type="NCBI Taxonomy" id="570508"/>
    <lineage>
        <taxon>Bacteria</taxon>
        <taxon>Pseudomonadati</taxon>
        <taxon>Campylobacterota</taxon>
        <taxon>Epsilonproteobacteria</taxon>
        <taxon>Campylobacterales</taxon>
        <taxon>Helicobacteraceae</taxon>
        <taxon>Helicobacter</taxon>
    </lineage>
</organism>
<feature type="chain" id="PRO_0000380396" description="DNA ligase">
    <location>
        <begin position="1"/>
        <end position="656"/>
    </location>
</feature>
<feature type="domain" description="BRCT" evidence="1">
    <location>
        <begin position="577"/>
        <end position="656"/>
    </location>
</feature>
<feature type="active site" description="N6-AMP-lysine intermediate" evidence="1">
    <location>
        <position position="112"/>
    </location>
</feature>
<feature type="binding site" evidence="1">
    <location>
        <begin position="32"/>
        <end position="36"/>
    </location>
    <ligand>
        <name>NAD(+)</name>
        <dbReference type="ChEBI" id="CHEBI:57540"/>
    </ligand>
</feature>
<feature type="binding site" evidence="1">
    <location>
        <begin position="81"/>
        <end position="82"/>
    </location>
    <ligand>
        <name>NAD(+)</name>
        <dbReference type="ChEBI" id="CHEBI:57540"/>
    </ligand>
</feature>
<feature type="binding site" evidence="1">
    <location>
        <position position="133"/>
    </location>
    <ligand>
        <name>NAD(+)</name>
        <dbReference type="ChEBI" id="CHEBI:57540"/>
    </ligand>
</feature>
<feature type="binding site" evidence="1">
    <location>
        <position position="167"/>
    </location>
    <ligand>
        <name>NAD(+)</name>
        <dbReference type="ChEBI" id="CHEBI:57540"/>
    </ligand>
</feature>
<feature type="binding site" evidence="1">
    <location>
        <position position="306"/>
    </location>
    <ligand>
        <name>NAD(+)</name>
        <dbReference type="ChEBI" id="CHEBI:57540"/>
    </ligand>
</feature>
<feature type="binding site" evidence="1">
    <location>
        <position position="400"/>
    </location>
    <ligand>
        <name>Zn(2+)</name>
        <dbReference type="ChEBI" id="CHEBI:29105"/>
    </ligand>
</feature>
<feature type="binding site" evidence="1">
    <location>
        <position position="403"/>
    </location>
    <ligand>
        <name>Zn(2+)</name>
        <dbReference type="ChEBI" id="CHEBI:29105"/>
    </ligand>
</feature>
<feature type="binding site" evidence="1">
    <location>
        <position position="416"/>
    </location>
    <ligand>
        <name>Zn(2+)</name>
        <dbReference type="ChEBI" id="CHEBI:29105"/>
    </ligand>
</feature>
<feature type="binding site" evidence="1">
    <location>
        <position position="421"/>
    </location>
    <ligand>
        <name>Zn(2+)</name>
        <dbReference type="ChEBI" id="CHEBI:29105"/>
    </ligand>
</feature>
<accession>B6JLJ9</accession>
<evidence type="ECO:0000255" key="1">
    <source>
        <dbReference type="HAMAP-Rule" id="MF_01588"/>
    </source>
</evidence>
<gene>
    <name evidence="1" type="primary">ligA</name>
    <name type="ordered locus">HPP12_0624</name>
</gene>
<protein>
    <recommendedName>
        <fullName evidence="1">DNA ligase</fullName>
        <ecNumber evidence="1">6.5.1.2</ecNumber>
    </recommendedName>
    <alternativeName>
        <fullName evidence="1">Polydeoxyribonucleotide synthase [NAD(+)]</fullName>
    </alternativeName>
</protein>
<dbReference type="EC" id="6.5.1.2" evidence="1"/>
<dbReference type="EMBL" id="CP001217">
    <property type="protein sequence ID" value="ACJ07777.1"/>
    <property type="molecule type" value="Genomic_DNA"/>
</dbReference>
<dbReference type="SMR" id="B6JLJ9"/>
<dbReference type="KEGG" id="hpp:HPP12_0624"/>
<dbReference type="HOGENOM" id="CLU_007764_2_1_7"/>
<dbReference type="Proteomes" id="UP000008198">
    <property type="component" value="Chromosome"/>
</dbReference>
<dbReference type="GO" id="GO:0005829">
    <property type="term" value="C:cytosol"/>
    <property type="evidence" value="ECO:0007669"/>
    <property type="project" value="TreeGrafter"/>
</dbReference>
<dbReference type="GO" id="GO:0003677">
    <property type="term" value="F:DNA binding"/>
    <property type="evidence" value="ECO:0007669"/>
    <property type="project" value="InterPro"/>
</dbReference>
<dbReference type="GO" id="GO:0003911">
    <property type="term" value="F:DNA ligase (NAD+) activity"/>
    <property type="evidence" value="ECO:0007669"/>
    <property type="project" value="UniProtKB-UniRule"/>
</dbReference>
<dbReference type="GO" id="GO:0046872">
    <property type="term" value="F:metal ion binding"/>
    <property type="evidence" value="ECO:0007669"/>
    <property type="project" value="UniProtKB-KW"/>
</dbReference>
<dbReference type="GO" id="GO:0006281">
    <property type="term" value="P:DNA repair"/>
    <property type="evidence" value="ECO:0007669"/>
    <property type="project" value="UniProtKB-KW"/>
</dbReference>
<dbReference type="GO" id="GO:0006260">
    <property type="term" value="P:DNA replication"/>
    <property type="evidence" value="ECO:0007669"/>
    <property type="project" value="UniProtKB-KW"/>
</dbReference>
<dbReference type="CDD" id="cd17748">
    <property type="entry name" value="BRCT_DNA_ligase_like"/>
    <property type="match status" value="1"/>
</dbReference>
<dbReference type="CDD" id="cd00114">
    <property type="entry name" value="LIGANc"/>
    <property type="match status" value="1"/>
</dbReference>
<dbReference type="FunFam" id="1.10.150.20:FF:000007">
    <property type="entry name" value="DNA ligase"/>
    <property type="match status" value="1"/>
</dbReference>
<dbReference type="FunFam" id="2.40.50.140:FF:000012">
    <property type="entry name" value="DNA ligase"/>
    <property type="match status" value="1"/>
</dbReference>
<dbReference type="FunFam" id="3.40.50.10190:FF:000069">
    <property type="entry name" value="DNA ligase"/>
    <property type="match status" value="1"/>
</dbReference>
<dbReference type="Gene3D" id="1.10.150.20">
    <property type="entry name" value="5' to 3' exonuclease, C-terminal subdomain"/>
    <property type="match status" value="2"/>
</dbReference>
<dbReference type="Gene3D" id="3.40.50.10190">
    <property type="entry name" value="BRCT domain"/>
    <property type="match status" value="1"/>
</dbReference>
<dbReference type="Gene3D" id="3.30.470.30">
    <property type="entry name" value="DNA ligase/mRNA capping enzyme"/>
    <property type="match status" value="1"/>
</dbReference>
<dbReference type="Gene3D" id="1.10.287.610">
    <property type="entry name" value="Helix hairpin bin"/>
    <property type="match status" value="1"/>
</dbReference>
<dbReference type="Gene3D" id="2.40.50.140">
    <property type="entry name" value="Nucleic acid-binding proteins"/>
    <property type="match status" value="1"/>
</dbReference>
<dbReference type="HAMAP" id="MF_01588">
    <property type="entry name" value="DNA_ligase_A"/>
    <property type="match status" value="1"/>
</dbReference>
<dbReference type="InterPro" id="IPR001357">
    <property type="entry name" value="BRCT_dom"/>
</dbReference>
<dbReference type="InterPro" id="IPR036420">
    <property type="entry name" value="BRCT_dom_sf"/>
</dbReference>
<dbReference type="InterPro" id="IPR001679">
    <property type="entry name" value="DNA_ligase"/>
</dbReference>
<dbReference type="InterPro" id="IPR018239">
    <property type="entry name" value="DNA_ligase_AS"/>
</dbReference>
<dbReference type="InterPro" id="IPR033136">
    <property type="entry name" value="DNA_ligase_CS"/>
</dbReference>
<dbReference type="InterPro" id="IPR013839">
    <property type="entry name" value="DNAligase_adenylation"/>
</dbReference>
<dbReference type="InterPro" id="IPR013840">
    <property type="entry name" value="DNAligase_N"/>
</dbReference>
<dbReference type="InterPro" id="IPR003583">
    <property type="entry name" value="Hlx-hairpin-Hlx_DNA-bd_motif"/>
</dbReference>
<dbReference type="InterPro" id="IPR012340">
    <property type="entry name" value="NA-bd_OB-fold"/>
</dbReference>
<dbReference type="InterPro" id="IPR004150">
    <property type="entry name" value="NAD_DNA_ligase_OB"/>
</dbReference>
<dbReference type="InterPro" id="IPR010994">
    <property type="entry name" value="RuvA_2-like"/>
</dbReference>
<dbReference type="NCBIfam" id="TIGR00575">
    <property type="entry name" value="dnlj"/>
    <property type="match status" value="1"/>
</dbReference>
<dbReference type="NCBIfam" id="NF005932">
    <property type="entry name" value="PRK07956.1"/>
    <property type="match status" value="1"/>
</dbReference>
<dbReference type="PANTHER" id="PTHR23389">
    <property type="entry name" value="CHROMOSOME TRANSMISSION FIDELITY FACTOR 18"/>
    <property type="match status" value="1"/>
</dbReference>
<dbReference type="PANTHER" id="PTHR23389:SF9">
    <property type="entry name" value="DNA LIGASE"/>
    <property type="match status" value="1"/>
</dbReference>
<dbReference type="Pfam" id="PF00533">
    <property type="entry name" value="BRCT"/>
    <property type="match status" value="1"/>
</dbReference>
<dbReference type="Pfam" id="PF01653">
    <property type="entry name" value="DNA_ligase_aden"/>
    <property type="match status" value="1"/>
</dbReference>
<dbReference type="Pfam" id="PF03120">
    <property type="entry name" value="DNA_ligase_OB"/>
    <property type="match status" value="1"/>
</dbReference>
<dbReference type="PIRSF" id="PIRSF001604">
    <property type="entry name" value="LigA"/>
    <property type="match status" value="1"/>
</dbReference>
<dbReference type="SMART" id="SM00292">
    <property type="entry name" value="BRCT"/>
    <property type="match status" value="1"/>
</dbReference>
<dbReference type="SMART" id="SM00278">
    <property type="entry name" value="HhH1"/>
    <property type="match status" value="3"/>
</dbReference>
<dbReference type="SMART" id="SM00532">
    <property type="entry name" value="LIGANc"/>
    <property type="match status" value="1"/>
</dbReference>
<dbReference type="SUPFAM" id="SSF52113">
    <property type="entry name" value="BRCT domain"/>
    <property type="match status" value="1"/>
</dbReference>
<dbReference type="SUPFAM" id="SSF56091">
    <property type="entry name" value="DNA ligase/mRNA capping enzyme, catalytic domain"/>
    <property type="match status" value="1"/>
</dbReference>
<dbReference type="SUPFAM" id="SSF50249">
    <property type="entry name" value="Nucleic acid-binding proteins"/>
    <property type="match status" value="1"/>
</dbReference>
<dbReference type="SUPFAM" id="SSF47781">
    <property type="entry name" value="RuvA domain 2-like"/>
    <property type="match status" value="1"/>
</dbReference>
<dbReference type="PROSITE" id="PS50172">
    <property type="entry name" value="BRCT"/>
    <property type="match status" value="1"/>
</dbReference>
<dbReference type="PROSITE" id="PS01055">
    <property type="entry name" value="DNA_LIGASE_N1"/>
    <property type="match status" value="1"/>
</dbReference>
<dbReference type="PROSITE" id="PS01056">
    <property type="entry name" value="DNA_LIGASE_N2"/>
    <property type="match status" value="1"/>
</dbReference>
<name>DNLJ_HELP2</name>
<keyword id="KW-0227">DNA damage</keyword>
<keyword id="KW-0234">DNA repair</keyword>
<keyword id="KW-0235">DNA replication</keyword>
<keyword id="KW-0436">Ligase</keyword>
<keyword id="KW-0460">Magnesium</keyword>
<keyword id="KW-0464">Manganese</keyword>
<keyword id="KW-0479">Metal-binding</keyword>
<keyword id="KW-0520">NAD</keyword>
<keyword id="KW-0862">Zinc</keyword>
<reference key="1">
    <citation type="submission" date="2008-10" db="EMBL/GenBank/DDBJ databases">
        <title>The complete genome sequence of Helicobacter pylori strain P12.</title>
        <authorList>
            <person name="Fischer W."/>
            <person name="Windhager L."/>
            <person name="Karnholz A."/>
            <person name="Zeiller M."/>
            <person name="Zimmer R."/>
            <person name="Haas R."/>
        </authorList>
    </citation>
    <scope>NUCLEOTIDE SEQUENCE [LARGE SCALE GENOMIC DNA]</scope>
    <source>
        <strain>P12</strain>
    </source>
</reference>